<protein>
    <recommendedName>
        <fullName evidence="1">UDP-N-acetylglucosamine 1-carboxyvinyltransferase</fullName>
        <ecNumber evidence="1">2.5.1.7</ecNumber>
    </recommendedName>
    <alternativeName>
        <fullName evidence="1">Enoylpyruvate transferase</fullName>
    </alternativeName>
    <alternativeName>
        <fullName evidence="1">UDP-N-acetylglucosamine enolpyruvyl transferase</fullName>
        <shortName evidence="1">EPT</shortName>
    </alternativeName>
</protein>
<comment type="function">
    <text evidence="1">Cell wall formation. Adds enolpyruvyl to UDP-N-acetylglucosamine.</text>
</comment>
<comment type="catalytic activity">
    <reaction evidence="1">
        <text>phosphoenolpyruvate + UDP-N-acetyl-alpha-D-glucosamine = UDP-N-acetyl-3-O-(1-carboxyvinyl)-alpha-D-glucosamine + phosphate</text>
        <dbReference type="Rhea" id="RHEA:18681"/>
        <dbReference type="ChEBI" id="CHEBI:43474"/>
        <dbReference type="ChEBI" id="CHEBI:57705"/>
        <dbReference type="ChEBI" id="CHEBI:58702"/>
        <dbReference type="ChEBI" id="CHEBI:68483"/>
        <dbReference type="EC" id="2.5.1.7"/>
    </reaction>
</comment>
<comment type="pathway">
    <text evidence="1">Cell wall biogenesis; peptidoglycan biosynthesis.</text>
</comment>
<comment type="subcellular location">
    <subcellularLocation>
        <location evidence="1">Cytoplasm</location>
    </subcellularLocation>
</comment>
<comment type="similarity">
    <text evidence="1">Belongs to the EPSP synthase family. MurA subfamily.</text>
</comment>
<sequence length="433" mass="44898">MMAVAEASQESLKQRLNVSGGNGLKGTLRVSGAKNSALVLMTASLLSEETIELTNIPSLTDIDGMSAILESLGVQVDRQSDCIRLTAAELSGSAPPYELVNSLRASFFSIGPLLGRLGHAQVPLPGGCRIGARPVVEHIRGLKALGAVVNVEHGIVTASVPGSKKRLTGAQIVLDCPSVGATETILMAAVLADGVSTIENAAQEPEVQDLANLLNSMGGQVSGAGGPLITVQGVERLRGCSNYPVIPDRIEAGTFLMAAAITRSPLVVEPVIPEHLSAVIQKLRDCGCSIQIKGRAVTITPGEITAVDITTQPFPGFPTDLQAPFMALMCTAKGTSVISEKIYENRLQHVAELQRMGASIRLEGSTAIVEGVAQLSAAPVTGTDLRAAAAMVLAGLSAKGITEVAGLKHLDRGYDDLEAKLSAAGAEVKRNIP</sequence>
<keyword id="KW-0131">Cell cycle</keyword>
<keyword id="KW-0132">Cell division</keyword>
<keyword id="KW-0133">Cell shape</keyword>
<keyword id="KW-0961">Cell wall biogenesis/degradation</keyword>
<keyword id="KW-0963">Cytoplasm</keyword>
<keyword id="KW-0573">Peptidoglycan synthesis</keyword>
<keyword id="KW-0670">Pyruvate</keyword>
<keyword id="KW-0808">Transferase</keyword>
<feature type="chain" id="PRO_1000023117" description="UDP-N-acetylglucosamine 1-carboxyvinyltransferase">
    <location>
        <begin position="1"/>
        <end position="433"/>
    </location>
</feature>
<feature type="active site" description="Proton donor" evidence="1">
    <location>
        <position position="128"/>
    </location>
</feature>
<feature type="binding site" evidence="1">
    <location>
        <begin position="34"/>
        <end position="35"/>
    </location>
    <ligand>
        <name>phosphoenolpyruvate</name>
        <dbReference type="ChEBI" id="CHEBI:58702"/>
    </ligand>
</feature>
<feature type="binding site" evidence="1">
    <location>
        <position position="104"/>
    </location>
    <ligand>
        <name>UDP-N-acetyl-alpha-D-glucosamine</name>
        <dbReference type="ChEBI" id="CHEBI:57705"/>
    </ligand>
</feature>
<feature type="binding site" evidence="1">
    <location>
        <position position="320"/>
    </location>
    <ligand>
        <name>UDP-N-acetyl-alpha-D-glucosamine</name>
        <dbReference type="ChEBI" id="CHEBI:57705"/>
    </ligand>
</feature>
<feature type="binding site" evidence="1">
    <location>
        <position position="342"/>
    </location>
    <ligand>
        <name>UDP-N-acetyl-alpha-D-glucosamine</name>
        <dbReference type="ChEBI" id="CHEBI:57705"/>
    </ligand>
</feature>
<feature type="modified residue" description="2-(S-cysteinyl)pyruvic acid O-phosphothioketal" evidence="1">
    <location>
        <position position="128"/>
    </location>
</feature>
<proteinExistence type="inferred from homology"/>
<accession>Q3AL98</accession>
<gene>
    <name evidence="1" type="primary">murA</name>
    <name type="ordered locus">Syncc9605_0866</name>
</gene>
<name>MURA_SYNSC</name>
<evidence type="ECO:0000255" key="1">
    <source>
        <dbReference type="HAMAP-Rule" id="MF_00111"/>
    </source>
</evidence>
<dbReference type="EC" id="2.5.1.7" evidence="1"/>
<dbReference type="EMBL" id="CP000110">
    <property type="protein sequence ID" value="ABB34634.1"/>
    <property type="molecule type" value="Genomic_DNA"/>
</dbReference>
<dbReference type="RefSeq" id="WP_011363859.1">
    <property type="nucleotide sequence ID" value="NC_007516.1"/>
</dbReference>
<dbReference type="SMR" id="Q3AL98"/>
<dbReference type="STRING" id="110662.Syncc9605_0866"/>
<dbReference type="KEGG" id="syd:Syncc9605_0866"/>
<dbReference type="eggNOG" id="COG0766">
    <property type="taxonomic scope" value="Bacteria"/>
</dbReference>
<dbReference type="HOGENOM" id="CLU_027387_0_0_3"/>
<dbReference type="OrthoDB" id="9803760at2"/>
<dbReference type="UniPathway" id="UPA00219"/>
<dbReference type="GO" id="GO:0005737">
    <property type="term" value="C:cytoplasm"/>
    <property type="evidence" value="ECO:0007669"/>
    <property type="project" value="UniProtKB-SubCell"/>
</dbReference>
<dbReference type="GO" id="GO:0008760">
    <property type="term" value="F:UDP-N-acetylglucosamine 1-carboxyvinyltransferase activity"/>
    <property type="evidence" value="ECO:0007669"/>
    <property type="project" value="UniProtKB-UniRule"/>
</dbReference>
<dbReference type="GO" id="GO:0051301">
    <property type="term" value="P:cell division"/>
    <property type="evidence" value="ECO:0007669"/>
    <property type="project" value="UniProtKB-KW"/>
</dbReference>
<dbReference type="GO" id="GO:0071555">
    <property type="term" value="P:cell wall organization"/>
    <property type="evidence" value="ECO:0007669"/>
    <property type="project" value="UniProtKB-KW"/>
</dbReference>
<dbReference type="GO" id="GO:0009252">
    <property type="term" value="P:peptidoglycan biosynthetic process"/>
    <property type="evidence" value="ECO:0007669"/>
    <property type="project" value="UniProtKB-UniRule"/>
</dbReference>
<dbReference type="GO" id="GO:0008360">
    <property type="term" value="P:regulation of cell shape"/>
    <property type="evidence" value="ECO:0007669"/>
    <property type="project" value="UniProtKB-KW"/>
</dbReference>
<dbReference type="GO" id="GO:0019277">
    <property type="term" value="P:UDP-N-acetylgalactosamine biosynthetic process"/>
    <property type="evidence" value="ECO:0007669"/>
    <property type="project" value="InterPro"/>
</dbReference>
<dbReference type="CDD" id="cd01555">
    <property type="entry name" value="UdpNAET"/>
    <property type="match status" value="1"/>
</dbReference>
<dbReference type="Gene3D" id="3.65.10.10">
    <property type="entry name" value="Enolpyruvate transferase domain"/>
    <property type="match status" value="2"/>
</dbReference>
<dbReference type="HAMAP" id="MF_00111">
    <property type="entry name" value="MurA"/>
    <property type="match status" value="1"/>
</dbReference>
<dbReference type="InterPro" id="IPR001986">
    <property type="entry name" value="Enolpyruvate_Tfrase_dom"/>
</dbReference>
<dbReference type="InterPro" id="IPR036968">
    <property type="entry name" value="Enolpyruvate_Tfrase_sf"/>
</dbReference>
<dbReference type="InterPro" id="IPR050068">
    <property type="entry name" value="MurA_subfamily"/>
</dbReference>
<dbReference type="InterPro" id="IPR013792">
    <property type="entry name" value="RNA3'P_cycl/enolpyr_Trfase_a/b"/>
</dbReference>
<dbReference type="InterPro" id="IPR005750">
    <property type="entry name" value="UDP_GlcNAc_COvinyl_MurA"/>
</dbReference>
<dbReference type="NCBIfam" id="TIGR01072">
    <property type="entry name" value="murA"/>
    <property type="match status" value="1"/>
</dbReference>
<dbReference type="NCBIfam" id="NF006873">
    <property type="entry name" value="PRK09369.1"/>
    <property type="match status" value="1"/>
</dbReference>
<dbReference type="PANTHER" id="PTHR43783">
    <property type="entry name" value="UDP-N-ACETYLGLUCOSAMINE 1-CARBOXYVINYLTRANSFERASE"/>
    <property type="match status" value="1"/>
</dbReference>
<dbReference type="PANTHER" id="PTHR43783:SF1">
    <property type="entry name" value="UDP-N-ACETYLGLUCOSAMINE 1-CARBOXYVINYLTRANSFERASE"/>
    <property type="match status" value="1"/>
</dbReference>
<dbReference type="Pfam" id="PF00275">
    <property type="entry name" value="EPSP_synthase"/>
    <property type="match status" value="1"/>
</dbReference>
<dbReference type="SUPFAM" id="SSF55205">
    <property type="entry name" value="EPT/RTPC-like"/>
    <property type="match status" value="1"/>
</dbReference>
<organism>
    <name type="scientific">Synechococcus sp. (strain CC9605)</name>
    <dbReference type="NCBI Taxonomy" id="110662"/>
    <lineage>
        <taxon>Bacteria</taxon>
        <taxon>Bacillati</taxon>
        <taxon>Cyanobacteriota</taxon>
        <taxon>Cyanophyceae</taxon>
        <taxon>Synechococcales</taxon>
        <taxon>Synechococcaceae</taxon>
        <taxon>Synechococcus</taxon>
    </lineage>
</organism>
<reference key="1">
    <citation type="submission" date="2005-07" db="EMBL/GenBank/DDBJ databases">
        <title>Complete sequence of Synechococcus sp. CC9605.</title>
        <authorList>
            <consortium name="US DOE Joint Genome Institute"/>
            <person name="Copeland A."/>
            <person name="Lucas S."/>
            <person name="Lapidus A."/>
            <person name="Barry K."/>
            <person name="Detter J.C."/>
            <person name="Glavina T."/>
            <person name="Hammon N."/>
            <person name="Israni S."/>
            <person name="Pitluck S."/>
            <person name="Schmutz J."/>
            <person name="Martinez M."/>
            <person name="Larimer F."/>
            <person name="Land M."/>
            <person name="Kyrpides N."/>
            <person name="Ivanova N."/>
            <person name="Richardson P."/>
        </authorList>
    </citation>
    <scope>NUCLEOTIDE SEQUENCE [LARGE SCALE GENOMIC DNA]</scope>
    <source>
        <strain>CC9605</strain>
    </source>
</reference>